<evidence type="ECO:0000255" key="1">
    <source>
        <dbReference type="HAMAP-Rule" id="MF_01351"/>
    </source>
</evidence>
<protein>
    <recommendedName>
        <fullName evidence="1">NAD(P)H-quinone oxidoreductase subunit I, chloroplastic</fullName>
        <ecNumber evidence="1">7.1.1.-</ecNumber>
    </recommendedName>
    <alternativeName>
        <fullName evidence="1">NAD(P)H dehydrogenase subunit I</fullName>
        <shortName evidence="1">NDH subunit I</shortName>
    </alternativeName>
    <alternativeName>
        <fullName evidence="1">NADH-plastoquinone oxidoreductase subunit I</fullName>
    </alternativeName>
</protein>
<name>NDHI_LAPLI</name>
<keyword id="KW-0004">4Fe-4S</keyword>
<keyword id="KW-0150">Chloroplast</keyword>
<keyword id="KW-0408">Iron</keyword>
<keyword id="KW-0411">Iron-sulfur</keyword>
<keyword id="KW-0472">Membrane</keyword>
<keyword id="KW-0479">Metal-binding</keyword>
<keyword id="KW-0520">NAD</keyword>
<keyword id="KW-0521">NADP</keyword>
<keyword id="KW-0934">Plastid</keyword>
<keyword id="KW-0618">Plastoquinone</keyword>
<keyword id="KW-0874">Quinone</keyword>
<keyword id="KW-0677">Repeat</keyword>
<keyword id="KW-0793">Thylakoid</keyword>
<keyword id="KW-1278">Translocase</keyword>
<sequence length="166" mass="19457">MFPMVTEFINYGQQTVRAARYIGQGFMITLSHANRLPVTIQYPYEKLITSERFRGRIHFEFDKCIACEVCVRVCPIDLPVVDWKLETDIRKKRLLNYSIDFGICIFCGNCVEYCPTNCLSMTEEYELSTYDRHELNYNQIALGRLPMSIIDDYTIRTILNLPEIKT</sequence>
<comment type="function">
    <text evidence="1">NDH shuttles electrons from NAD(P)H:plastoquinone, via FMN and iron-sulfur (Fe-S) centers, to quinones in the photosynthetic chain and possibly in a chloroplast respiratory chain. The immediate electron acceptor for the enzyme in this species is believed to be plastoquinone. Couples the redox reaction to proton translocation, and thus conserves the redox energy in a proton gradient.</text>
</comment>
<comment type="catalytic activity">
    <reaction evidence="1">
        <text>a plastoquinone + NADH + (n+1) H(+)(in) = a plastoquinol + NAD(+) + n H(+)(out)</text>
        <dbReference type="Rhea" id="RHEA:42608"/>
        <dbReference type="Rhea" id="RHEA-COMP:9561"/>
        <dbReference type="Rhea" id="RHEA-COMP:9562"/>
        <dbReference type="ChEBI" id="CHEBI:15378"/>
        <dbReference type="ChEBI" id="CHEBI:17757"/>
        <dbReference type="ChEBI" id="CHEBI:57540"/>
        <dbReference type="ChEBI" id="CHEBI:57945"/>
        <dbReference type="ChEBI" id="CHEBI:62192"/>
    </reaction>
</comment>
<comment type="catalytic activity">
    <reaction evidence="1">
        <text>a plastoquinone + NADPH + (n+1) H(+)(in) = a plastoquinol + NADP(+) + n H(+)(out)</text>
        <dbReference type="Rhea" id="RHEA:42612"/>
        <dbReference type="Rhea" id="RHEA-COMP:9561"/>
        <dbReference type="Rhea" id="RHEA-COMP:9562"/>
        <dbReference type="ChEBI" id="CHEBI:15378"/>
        <dbReference type="ChEBI" id="CHEBI:17757"/>
        <dbReference type="ChEBI" id="CHEBI:57783"/>
        <dbReference type="ChEBI" id="CHEBI:58349"/>
        <dbReference type="ChEBI" id="CHEBI:62192"/>
    </reaction>
</comment>
<comment type="cofactor">
    <cofactor evidence="1">
        <name>[4Fe-4S] cluster</name>
        <dbReference type="ChEBI" id="CHEBI:49883"/>
    </cofactor>
    <text evidence="1">Binds 2 [4Fe-4S] clusters per subunit.</text>
</comment>
<comment type="subunit">
    <text evidence="1">NDH is composed of at least 16 different subunits, 5 of which are encoded in the nucleus.</text>
</comment>
<comment type="subcellular location">
    <subcellularLocation>
        <location evidence="1">Plastid</location>
        <location evidence="1">Chloroplast thylakoid membrane</location>
        <topology evidence="1">Peripheral membrane protein</topology>
    </subcellularLocation>
</comment>
<comment type="similarity">
    <text evidence="1">Belongs to the complex I 23 kDa subunit family.</text>
</comment>
<geneLocation type="chloroplast"/>
<reference key="1">
    <citation type="submission" date="2003-01" db="EMBL/GenBank/DDBJ databases">
        <title>Chloroplast DNA phylogeny of tribe Heliantheae (Asteraceae).</title>
        <authorList>
            <person name="Panero J.L."/>
            <person name="Baldwin B.G."/>
            <person name="Schilling E.E."/>
            <person name="Clevinger J.A."/>
        </authorList>
    </citation>
    <scope>NUCLEOTIDE SEQUENCE [GENOMIC DNA]</scope>
</reference>
<organism>
    <name type="scientific">Laphamia lindheimeri</name>
    <name type="common">Lindheimer's rockdaisy</name>
    <name type="synonym">Perityle lindheimeri</name>
    <dbReference type="NCBI Taxonomy" id="217845"/>
    <lineage>
        <taxon>Eukaryota</taxon>
        <taxon>Viridiplantae</taxon>
        <taxon>Streptophyta</taxon>
        <taxon>Embryophyta</taxon>
        <taxon>Tracheophyta</taxon>
        <taxon>Spermatophyta</taxon>
        <taxon>Magnoliopsida</taxon>
        <taxon>eudicotyledons</taxon>
        <taxon>Gunneridae</taxon>
        <taxon>Pentapetalae</taxon>
        <taxon>asterids</taxon>
        <taxon>campanulids</taxon>
        <taxon>Asterales</taxon>
        <taxon>Asteraceae</taxon>
        <taxon>Asteroideae</taxon>
        <taxon>Heliantheae alliance</taxon>
        <taxon>Perityleae</taxon>
        <taxon>Laphamia</taxon>
    </lineage>
</organism>
<feature type="chain" id="PRO_0000250829" description="NAD(P)H-quinone oxidoreductase subunit I, chloroplastic">
    <location>
        <begin position="1"/>
        <end position="166"/>
    </location>
</feature>
<feature type="domain" description="4Fe-4S ferredoxin-type 1" evidence="1">
    <location>
        <begin position="55"/>
        <end position="84"/>
    </location>
</feature>
<feature type="domain" description="4Fe-4S ferredoxin-type 2" evidence="1">
    <location>
        <begin position="95"/>
        <end position="124"/>
    </location>
</feature>
<feature type="binding site" evidence="1">
    <location>
        <position position="64"/>
    </location>
    <ligand>
        <name>[4Fe-4S] cluster</name>
        <dbReference type="ChEBI" id="CHEBI:49883"/>
        <label>1</label>
    </ligand>
</feature>
<feature type="binding site" evidence="1">
    <location>
        <position position="67"/>
    </location>
    <ligand>
        <name>[4Fe-4S] cluster</name>
        <dbReference type="ChEBI" id="CHEBI:49883"/>
        <label>1</label>
    </ligand>
</feature>
<feature type="binding site" evidence="1">
    <location>
        <position position="70"/>
    </location>
    <ligand>
        <name>[4Fe-4S] cluster</name>
        <dbReference type="ChEBI" id="CHEBI:49883"/>
        <label>1</label>
    </ligand>
</feature>
<feature type="binding site" evidence="1">
    <location>
        <position position="74"/>
    </location>
    <ligand>
        <name>[4Fe-4S] cluster</name>
        <dbReference type="ChEBI" id="CHEBI:49883"/>
        <label>2</label>
    </ligand>
</feature>
<feature type="binding site" evidence="1">
    <location>
        <position position="104"/>
    </location>
    <ligand>
        <name>[4Fe-4S] cluster</name>
        <dbReference type="ChEBI" id="CHEBI:49883"/>
        <label>2</label>
    </ligand>
</feature>
<feature type="binding site" evidence="1">
    <location>
        <position position="107"/>
    </location>
    <ligand>
        <name>[4Fe-4S] cluster</name>
        <dbReference type="ChEBI" id="CHEBI:49883"/>
        <label>2</label>
    </ligand>
</feature>
<feature type="binding site" evidence="1">
    <location>
        <position position="110"/>
    </location>
    <ligand>
        <name>[4Fe-4S] cluster</name>
        <dbReference type="ChEBI" id="CHEBI:49883"/>
        <label>2</label>
    </ligand>
</feature>
<feature type="binding site" evidence="1">
    <location>
        <position position="114"/>
    </location>
    <ligand>
        <name>[4Fe-4S] cluster</name>
        <dbReference type="ChEBI" id="CHEBI:49883"/>
        <label>1</label>
    </ligand>
</feature>
<accession>Q8HVN2</accession>
<gene>
    <name evidence="1" type="primary">ndhI</name>
</gene>
<proteinExistence type="inferred from homology"/>
<dbReference type="EC" id="7.1.1.-" evidence="1"/>
<dbReference type="EMBL" id="AF383831">
    <property type="protein sequence ID" value="AAN61772.1"/>
    <property type="molecule type" value="Genomic_DNA"/>
</dbReference>
<dbReference type="SMR" id="Q8HVN2"/>
<dbReference type="GO" id="GO:0009535">
    <property type="term" value="C:chloroplast thylakoid membrane"/>
    <property type="evidence" value="ECO:0007669"/>
    <property type="project" value="UniProtKB-SubCell"/>
</dbReference>
<dbReference type="GO" id="GO:0051539">
    <property type="term" value="F:4 iron, 4 sulfur cluster binding"/>
    <property type="evidence" value="ECO:0007669"/>
    <property type="project" value="UniProtKB-KW"/>
</dbReference>
<dbReference type="GO" id="GO:0005506">
    <property type="term" value="F:iron ion binding"/>
    <property type="evidence" value="ECO:0007669"/>
    <property type="project" value="UniProtKB-UniRule"/>
</dbReference>
<dbReference type="GO" id="GO:0008137">
    <property type="term" value="F:NADH dehydrogenase (ubiquinone) activity"/>
    <property type="evidence" value="ECO:0007669"/>
    <property type="project" value="InterPro"/>
</dbReference>
<dbReference type="GO" id="GO:0048038">
    <property type="term" value="F:quinone binding"/>
    <property type="evidence" value="ECO:0007669"/>
    <property type="project" value="UniProtKB-KW"/>
</dbReference>
<dbReference type="GO" id="GO:0019684">
    <property type="term" value="P:photosynthesis, light reaction"/>
    <property type="evidence" value="ECO:0007669"/>
    <property type="project" value="UniProtKB-UniRule"/>
</dbReference>
<dbReference type="FunFam" id="3.30.70.3270:FF:000006">
    <property type="entry name" value="NAD(P)H-quinone oxidoreductase subunit I, chloroplastic"/>
    <property type="match status" value="1"/>
</dbReference>
<dbReference type="Gene3D" id="3.30.70.3270">
    <property type="match status" value="1"/>
</dbReference>
<dbReference type="HAMAP" id="MF_01351">
    <property type="entry name" value="NDH1_NuoI"/>
    <property type="match status" value="1"/>
</dbReference>
<dbReference type="InterPro" id="IPR017896">
    <property type="entry name" value="4Fe4S_Fe-S-bd"/>
</dbReference>
<dbReference type="InterPro" id="IPR017900">
    <property type="entry name" value="4Fe4S_Fe_S_CS"/>
</dbReference>
<dbReference type="InterPro" id="IPR010226">
    <property type="entry name" value="NADH_quinone_OxRdtase_chainI"/>
</dbReference>
<dbReference type="InterPro" id="IPR004497">
    <property type="entry name" value="NDHI"/>
</dbReference>
<dbReference type="NCBIfam" id="TIGR00403">
    <property type="entry name" value="ndhI"/>
    <property type="match status" value="1"/>
</dbReference>
<dbReference type="NCBIfam" id="TIGR01971">
    <property type="entry name" value="NuoI"/>
    <property type="match status" value="1"/>
</dbReference>
<dbReference type="NCBIfam" id="NF004537">
    <property type="entry name" value="PRK05888.1-3"/>
    <property type="match status" value="1"/>
</dbReference>
<dbReference type="PANTHER" id="PTHR47275">
    <property type="entry name" value="NAD(P)H-QUINONE OXIDOREDUCTASE SUBUNIT I, CHLOROPLASTIC"/>
    <property type="match status" value="1"/>
</dbReference>
<dbReference type="PANTHER" id="PTHR47275:SF1">
    <property type="entry name" value="NAD(P)H-QUINONE OXIDOREDUCTASE SUBUNIT I, CHLOROPLASTIC"/>
    <property type="match status" value="1"/>
</dbReference>
<dbReference type="Pfam" id="PF00037">
    <property type="entry name" value="Fer4"/>
    <property type="match status" value="2"/>
</dbReference>
<dbReference type="SUPFAM" id="SSF54862">
    <property type="entry name" value="4Fe-4S ferredoxins"/>
    <property type="match status" value="1"/>
</dbReference>
<dbReference type="PROSITE" id="PS00198">
    <property type="entry name" value="4FE4S_FER_1"/>
    <property type="match status" value="2"/>
</dbReference>
<dbReference type="PROSITE" id="PS51379">
    <property type="entry name" value="4FE4S_FER_2"/>
    <property type="match status" value="2"/>
</dbReference>